<proteinExistence type="evidence at protein level"/>
<feature type="chain" id="PRO_0000438913" description="Cytochrome P450 27C1">
    <location>
        <begin position="1"/>
        <end position="537"/>
    </location>
</feature>
<feature type="binding site" description="axial binding residue" evidence="2">
    <location>
        <position position="483"/>
    </location>
    <ligand>
        <name>heme</name>
        <dbReference type="ChEBI" id="CHEBI:30413"/>
    </ligand>
    <ligandPart>
        <name>Fe</name>
        <dbReference type="ChEBI" id="CHEBI:18248"/>
    </ligandPart>
</feature>
<sequence length="537" mass="61621">MLWQCWLQQAQRMRMMMKALLRFRATRLDSEMMGGWRRGAQRLAAGVVEGQRTLPQEGAAAGPRNLKEMPGPSTFRNLLEFFWRDGFSRIHEIQQNHIREYGRIFKSHFGPQFVVSIADRDMVAQILRAERDAPQRANMESWQEYRDLRGRSTGLISAEGKKWLAMRSVLRQKILRPRDVFIYAGGVNEVVSDLIKRIKTLRSREDDGETVTNVNDLYFKYSMEAVATILYECRLGCLQNEVPKQTLEYIEALELMFSMFKTTMYAGAIPKWLRPFIPKPWEEFCRSWDGLFRFSQIHVDGRLREIQACLDRGEEVKGGLLTSILISKELTLEELYANMTEMLLAGVDTTSFTLSWATYLLAKNPQAQQMVYDQIVQNLGKDTVPTAEDVPKLPLIRAVLKETLRLFPVLPGNGRVTQDDLVLGGYLIPKGTQLALCHYSTSYDQEYFTAAEDFQPGRWLRHGHLDRVENFGSIPFGYGIRSCIGKRVAELEIHLALIQLLQNFEIRTSPKTQTVLPKTHGLLCPAGAINVRFVNRE</sequence>
<comment type="function">
    <text evidence="1">Efficiently catalyzes the conversion of all-trans retinol (also called vitamin A1, the precursor of 11-cis retinal) to 3,4-didehydroretinol (also called vitamin A2, the precursor of 11-cis 3,4-didehydroretinal), also acts on all-trans retinal and all-trans retinoic acid. The replacement of 11-cis retinal chromophore in photopigments with 11-cis 3,4-didehydroretinal enhances sensitivity to long-wavelength light. This may improve vision in fresh water which is often turbid.</text>
</comment>
<comment type="catalytic activity">
    <reaction evidence="1">
        <text>all-trans-retinol + 2 reduced [adrenodoxin] + O2 + 2 H(+) = all-trans-3,4-didehydroretinol + 2 oxidized [adrenodoxin] + 2 H2O</text>
        <dbReference type="Rhea" id="RHEA:50292"/>
        <dbReference type="Rhea" id="RHEA-COMP:9998"/>
        <dbReference type="Rhea" id="RHEA-COMP:9999"/>
        <dbReference type="ChEBI" id="CHEBI:15377"/>
        <dbReference type="ChEBI" id="CHEBI:15378"/>
        <dbReference type="ChEBI" id="CHEBI:15379"/>
        <dbReference type="ChEBI" id="CHEBI:17336"/>
        <dbReference type="ChEBI" id="CHEBI:33737"/>
        <dbReference type="ChEBI" id="CHEBI:33738"/>
        <dbReference type="ChEBI" id="CHEBI:132246"/>
        <dbReference type="EC" id="1.14.19.53"/>
    </reaction>
</comment>
<comment type="cofactor">
    <cofactor evidence="2">
        <name>heme</name>
        <dbReference type="ChEBI" id="CHEBI:30413"/>
    </cofactor>
</comment>
<comment type="subcellular location">
    <subcellularLocation>
        <location evidence="5">Membrane</location>
    </subcellularLocation>
</comment>
<comment type="tissue specificity">
    <text evidence="4">Expressed in the dorsal third of retinal pigment epithelium, but not in the ventral counterpart (at protein level).</text>
</comment>
<comment type="similarity">
    <text evidence="5">Belongs to the cytochrome P450 family.</text>
</comment>
<comment type="online information" name="Protein Spotlight">
    <link uri="https://www.proteinspotlight.org/back_issues/192/"/>
    <text>Seeing through the murk - Issue 192 of June 2017</text>
</comment>
<organism>
    <name type="scientific">Aquarana catesbeiana</name>
    <name type="common">American bullfrog</name>
    <name type="synonym">Rana catesbeiana</name>
    <dbReference type="NCBI Taxonomy" id="8400"/>
    <lineage>
        <taxon>Eukaryota</taxon>
        <taxon>Metazoa</taxon>
        <taxon>Chordata</taxon>
        <taxon>Craniata</taxon>
        <taxon>Vertebrata</taxon>
        <taxon>Euteleostomi</taxon>
        <taxon>Amphibia</taxon>
        <taxon>Batrachia</taxon>
        <taxon>Anura</taxon>
        <taxon>Neobatrachia</taxon>
        <taxon>Ranoidea</taxon>
        <taxon>Ranidae</taxon>
        <taxon>Aquarana</taxon>
    </lineage>
</organism>
<reference key="1">
    <citation type="journal article" date="2015" name="Curr. Biol.">
        <title>Cyp27c1 Red-Shifts the Spectral Sensitivity of Photoreceptors by Converting Vitamin A1 into A2.</title>
        <authorList>
            <person name="Enright J.M."/>
            <person name="Toomey M.B."/>
            <person name="Sato S.Y."/>
            <person name="Temple S.E."/>
            <person name="Allen J.R."/>
            <person name="Fujiwara R."/>
            <person name="Kramlinger V.M."/>
            <person name="Nagy L.D."/>
            <person name="Johnson K.M."/>
            <person name="Xiao Y."/>
            <person name="How M.J."/>
            <person name="Johnson S.L."/>
            <person name="Roberts N.W."/>
            <person name="Kefalov V.J."/>
            <person name="Guengerich F.P."/>
            <person name="Corbo J.C."/>
        </authorList>
    </citation>
    <scope>PRELIMINARY NUCLEOTIDE SEQUENCE [MRNA]</scope>
    <scope>TISSUE SPECIFICITY</scope>
</reference>
<evidence type="ECO:0000250" key="1">
    <source>
        <dbReference type="UniProtKB" id="A8WGA0"/>
    </source>
</evidence>
<evidence type="ECO:0000250" key="2">
    <source>
        <dbReference type="UniProtKB" id="P04798"/>
    </source>
</evidence>
<evidence type="ECO:0000250" key="3">
    <source>
        <dbReference type="UniProtKB" id="Q4G0S4"/>
    </source>
</evidence>
<evidence type="ECO:0000269" key="4">
    <source>
    </source>
</evidence>
<evidence type="ECO:0000305" key="5"/>
<gene>
    <name type="primary">cyp27c1</name>
</gene>
<name>C27C1_AQUCT</name>
<keyword id="KW-0349">Heme</keyword>
<keyword id="KW-0408">Iron</keyword>
<keyword id="KW-0443">Lipid metabolism</keyword>
<keyword id="KW-0472">Membrane</keyword>
<keyword id="KW-0479">Metal-binding</keyword>
<keyword id="KW-0503">Monooxygenase</keyword>
<keyword id="KW-0560">Oxidoreductase</keyword>
<protein>
    <recommendedName>
        <fullName>Cytochrome P450 27C1</fullName>
        <ecNumber evidence="1">1.14.19.53</ecNumber>
    </recommendedName>
    <alternativeName>
        <fullName evidence="3">All-trans retinol 3,4-desaturase</fullName>
    </alternativeName>
</protein>
<accession>P0DOX0</accession>
<dbReference type="EC" id="1.14.19.53" evidence="1"/>
<dbReference type="SMR" id="P0DOX0"/>
<dbReference type="GO" id="GO:0005743">
    <property type="term" value="C:mitochondrial inner membrane"/>
    <property type="evidence" value="ECO:0007669"/>
    <property type="project" value="TreeGrafter"/>
</dbReference>
<dbReference type="GO" id="GO:0061896">
    <property type="term" value="F:all-trans retinol 3,4-desaturase activity"/>
    <property type="evidence" value="ECO:0007669"/>
    <property type="project" value="RHEA"/>
</dbReference>
<dbReference type="GO" id="GO:0020037">
    <property type="term" value="F:heme binding"/>
    <property type="evidence" value="ECO:0007669"/>
    <property type="project" value="InterPro"/>
</dbReference>
<dbReference type="GO" id="GO:0005506">
    <property type="term" value="F:iron ion binding"/>
    <property type="evidence" value="ECO:0007669"/>
    <property type="project" value="InterPro"/>
</dbReference>
<dbReference type="GO" id="GO:0004497">
    <property type="term" value="F:monooxygenase activity"/>
    <property type="evidence" value="ECO:0007669"/>
    <property type="project" value="UniProtKB-KW"/>
</dbReference>
<dbReference type="GO" id="GO:0006700">
    <property type="term" value="P:C21-steroid hormone biosynthetic process"/>
    <property type="evidence" value="ECO:0007669"/>
    <property type="project" value="TreeGrafter"/>
</dbReference>
<dbReference type="GO" id="GO:0071375">
    <property type="term" value="P:cellular response to peptide hormone stimulus"/>
    <property type="evidence" value="ECO:0007669"/>
    <property type="project" value="TreeGrafter"/>
</dbReference>
<dbReference type="GO" id="GO:0008203">
    <property type="term" value="P:cholesterol metabolic process"/>
    <property type="evidence" value="ECO:0007669"/>
    <property type="project" value="TreeGrafter"/>
</dbReference>
<dbReference type="GO" id="GO:0034650">
    <property type="term" value="P:cortisol metabolic process"/>
    <property type="evidence" value="ECO:0007669"/>
    <property type="project" value="TreeGrafter"/>
</dbReference>
<dbReference type="GO" id="GO:0006704">
    <property type="term" value="P:glucocorticoid biosynthetic process"/>
    <property type="evidence" value="ECO:0007669"/>
    <property type="project" value="TreeGrafter"/>
</dbReference>
<dbReference type="CDD" id="cd20647">
    <property type="entry name" value="CYP27C1"/>
    <property type="match status" value="1"/>
</dbReference>
<dbReference type="FunFam" id="1.10.630.10:FF:000073">
    <property type="entry name" value="Cytochrome P450 family 27 subfamily C member 1"/>
    <property type="match status" value="1"/>
</dbReference>
<dbReference type="Gene3D" id="1.10.630.10">
    <property type="entry name" value="Cytochrome P450"/>
    <property type="match status" value="1"/>
</dbReference>
<dbReference type="InterPro" id="IPR050479">
    <property type="entry name" value="CYP11_CYP27_families"/>
</dbReference>
<dbReference type="InterPro" id="IPR001128">
    <property type="entry name" value="Cyt_P450"/>
</dbReference>
<dbReference type="InterPro" id="IPR017972">
    <property type="entry name" value="Cyt_P450_CS"/>
</dbReference>
<dbReference type="InterPro" id="IPR002401">
    <property type="entry name" value="Cyt_P450_E_grp-I"/>
</dbReference>
<dbReference type="InterPro" id="IPR036396">
    <property type="entry name" value="Cyt_P450_sf"/>
</dbReference>
<dbReference type="PANTHER" id="PTHR24279">
    <property type="entry name" value="CYTOCHROME P450"/>
    <property type="match status" value="1"/>
</dbReference>
<dbReference type="PANTHER" id="PTHR24279:SF122">
    <property type="entry name" value="CYTOCHROME P450 FAMILY 27 SUBFAMILY C MEMBER 1"/>
    <property type="match status" value="1"/>
</dbReference>
<dbReference type="Pfam" id="PF00067">
    <property type="entry name" value="p450"/>
    <property type="match status" value="1"/>
</dbReference>
<dbReference type="PRINTS" id="PR00463">
    <property type="entry name" value="EP450I"/>
</dbReference>
<dbReference type="PRINTS" id="PR00385">
    <property type="entry name" value="P450"/>
</dbReference>
<dbReference type="SUPFAM" id="SSF48264">
    <property type="entry name" value="Cytochrome P450"/>
    <property type="match status" value="1"/>
</dbReference>
<dbReference type="PROSITE" id="PS00086">
    <property type="entry name" value="CYTOCHROME_P450"/>
    <property type="match status" value="1"/>
</dbReference>